<keyword id="KW-0963">Cytoplasm</keyword>
<keyword id="KW-0489">Methyltransferase</keyword>
<keyword id="KW-1185">Reference proteome</keyword>
<keyword id="KW-0698">rRNA processing</keyword>
<keyword id="KW-0949">S-adenosyl-L-methionine</keyword>
<keyword id="KW-0808">Transferase</keyword>
<reference key="1">
    <citation type="journal article" date="2002" name="Proc. Natl. Acad. Sci. U.S.A.">
        <title>Extensive mosaic structure revealed by the complete genome sequence of uropathogenic Escherichia coli.</title>
        <authorList>
            <person name="Welch R.A."/>
            <person name="Burland V."/>
            <person name="Plunkett G. III"/>
            <person name="Redford P."/>
            <person name="Roesch P."/>
            <person name="Rasko D."/>
            <person name="Buckles E.L."/>
            <person name="Liou S.-R."/>
            <person name="Boutin A."/>
            <person name="Hackett J."/>
            <person name="Stroud D."/>
            <person name="Mayhew G.F."/>
            <person name="Rose D.J."/>
            <person name="Zhou S."/>
            <person name="Schwartz D.C."/>
            <person name="Perna N.T."/>
            <person name="Mobley H.L.T."/>
            <person name="Donnenberg M.S."/>
            <person name="Blattner F.R."/>
        </authorList>
    </citation>
    <scope>NUCLEOTIDE SEQUENCE [LARGE SCALE GENOMIC DNA]</scope>
    <source>
        <strain>CFT073 / ATCC 700928 / UPEC</strain>
    </source>
</reference>
<evidence type="ECO:0000255" key="1">
    <source>
        <dbReference type="HAMAP-Rule" id="MF_01862"/>
    </source>
</evidence>
<comment type="function">
    <text evidence="1">Specifically methylates the guanine in position 1207 of 16S rRNA in the 30S particle.</text>
</comment>
<comment type="catalytic activity">
    <reaction evidence="1">
        <text>guanosine(1207) in 16S rRNA + S-adenosyl-L-methionine = N(2)-methylguanosine(1207) in 16S rRNA + S-adenosyl-L-homocysteine + H(+)</text>
        <dbReference type="Rhea" id="RHEA:42736"/>
        <dbReference type="Rhea" id="RHEA-COMP:10213"/>
        <dbReference type="Rhea" id="RHEA-COMP:10214"/>
        <dbReference type="ChEBI" id="CHEBI:15378"/>
        <dbReference type="ChEBI" id="CHEBI:57856"/>
        <dbReference type="ChEBI" id="CHEBI:59789"/>
        <dbReference type="ChEBI" id="CHEBI:74269"/>
        <dbReference type="ChEBI" id="CHEBI:74481"/>
        <dbReference type="EC" id="2.1.1.172"/>
    </reaction>
</comment>
<comment type="subunit">
    <text evidence="1">Monomer.</text>
</comment>
<comment type="subcellular location">
    <subcellularLocation>
        <location evidence="1">Cytoplasm</location>
    </subcellularLocation>
</comment>
<comment type="similarity">
    <text evidence="1">Belongs to the methyltransferase superfamily. RsmC family.</text>
</comment>
<dbReference type="EC" id="2.1.1.172" evidence="1"/>
<dbReference type="EMBL" id="AE014075">
    <property type="protein sequence ID" value="AAN83870.1"/>
    <property type="molecule type" value="Genomic_DNA"/>
</dbReference>
<dbReference type="RefSeq" id="WP_001272331.1">
    <property type="nucleotide sequence ID" value="NZ_CP051263.1"/>
</dbReference>
<dbReference type="SMR" id="Q8FA64"/>
<dbReference type="STRING" id="199310.c5450"/>
<dbReference type="KEGG" id="ecc:c5450"/>
<dbReference type="eggNOG" id="COG2813">
    <property type="taxonomic scope" value="Bacteria"/>
</dbReference>
<dbReference type="HOGENOM" id="CLU_049581_0_1_6"/>
<dbReference type="BioCyc" id="ECOL199310:C5450-MONOMER"/>
<dbReference type="Proteomes" id="UP000001410">
    <property type="component" value="Chromosome"/>
</dbReference>
<dbReference type="GO" id="GO:0005737">
    <property type="term" value="C:cytoplasm"/>
    <property type="evidence" value="ECO:0007669"/>
    <property type="project" value="UniProtKB-SubCell"/>
</dbReference>
<dbReference type="GO" id="GO:0052914">
    <property type="term" value="F:16S rRNA (guanine(1207)-N(2))-methyltransferase activity"/>
    <property type="evidence" value="ECO:0007669"/>
    <property type="project" value="UniProtKB-EC"/>
</dbReference>
<dbReference type="GO" id="GO:0003676">
    <property type="term" value="F:nucleic acid binding"/>
    <property type="evidence" value="ECO:0007669"/>
    <property type="project" value="InterPro"/>
</dbReference>
<dbReference type="CDD" id="cd02440">
    <property type="entry name" value="AdoMet_MTases"/>
    <property type="match status" value="1"/>
</dbReference>
<dbReference type="FunFam" id="3.40.50.150:FF:000058">
    <property type="entry name" value="Ribosomal RNA small subunit methyltransferase C"/>
    <property type="match status" value="1"/>
</dbReference>
<dbReference type="FunFam" id="3.40.50.150:FF:000063">
    <property type="entry name" value="Ribosomal RNA small subunit methyltransferase C"/>
    <property type="match status" value="1"/>
</dbReference>
<dbReference type="Gene3D" id="3.40.50.150">
    <property type="entry name" value="Vaccinia Virus protein VP39"/>
    <property type="match status" value="2"/>
</dbReference>
<dbReference type="HAMAP" id="MF_01862">
    <property type="entry name" value="16SrRNA_methyltr_C"/>
    <property type="match status" value="1"/>
</dbReference>
<dbReference type="InterPro" id="IPR002052">
    <property type="entry name" value="DNA_methylase_N6_adenine_CS"/>
</dbReference>
<dbReference type="InterPro" id="IPR013675">
    <property type="entry name" value="Mtase_sm_N"/>
</dbReference>
<dbReference type="InterPro" id="IPR023543">
    <property type="entry name" value="rRNA_ssu_MeTfrase_C"/>
</dbReference>
<dbReference type="InterPro" id="IPR046977">
    <property type="entry name" value="RsmC/RlmG"/>
</dbReference>
<dbReference type="InterPro" id="IPR029063">
    <property type="entry name" value="SAM-dependent_MTases_sf"/>
</dbReference>
<dbReference type="InterPro" id="IPR007848">
    <property type="entry name" value="Small_mtfrase_dom"/>
</dbReference>
<dbReference type="NCBIfam" id="NF007023">
    <property type="entry name" value="PRK09489.1"/>
    <property type="match status" value="1"/>
</dbReference>
<dbReference type="PANTHER" id="PTHR47816">
    <property type="entry name" value="RIBOSOMAL RNA SMALL SUBUNIT METHYLTRANSFERASE C"/>
    <property type="match status" value="1"/>
</dbReference>
<dbReference type="PANTHER" id="PTHR47816:SF4">
    <property type="entry name" value="RIBOSOMAL RNA SMALL SUBUNIT METHYLTRANSFERASE C"/>
    <property type="match status" value="1"/>
</dbReference>
<dbReference type="Pfam" id="PF05175">
    <property type="entry name" value="MTS"/>
    <property type="match status" value="1"/>
</dbReference>
<dbReference type="Pfam" id="PF08468">
    <property type="entry name" value="MTS_N"/>
    <property type="match status" value="1"/>
</dbReference>
<dbReference type="SUPFAM" id="SSF53335">
    <property type="entry name" value="S-adenosyl-L-methionine-dependent methyltransferases"/>
    <property type="match status" value="1"/>
</dbReference>
<name>RSMC_ECOL6</name>
<gene>
    <name evidence="1" type="primary">rsmC</name>
    <name type="ordered locus">c5450</name>
</gene>
<organism>
    <name type="scientific">Escherichia coli O6:H1 (strain CFT073 / ATCC 700928 / UPEC)</name>
    <dbReference type="NCBI Taxonomy" id="199310"/>
    <lineage>
        <taxon>Bacteria</taxon>
        <taxon>Pseudomonadati</taxon>
        <taxon>Pseudomonadota</taxon>
        <taxon>Gammaproteobacteria</taxon>
        <taxon>Enterobacterales</taxon>
        <taxon>Enterobacteriaceae</taxon>
        <taxon>Escherichia</taxon>
    </lineage>
</organism>
<accession>Q8FA64</accession>
<protein>
    <recommendedName>
        <fullName evidence="1">Ribosomal RNA small subunit methyltransferase C</fullName>
        <ecNumber evidence="1">2.1.1.172</ecNumber>
    </recommendedName>
    <alternativeName>
        <fullName evidence="1">16S rRNA m2G1207 methyltransferase</fullName>
    </alternativeName>
    <alternativeName>
        <fullName evidence="1">rRNA (guanine-N(2)-)-methyltransferase RsmC</fullName>
    </alternativeName>
</protein>
<feature type="chain" id="PRO_0000369710" description="Ribosomal RNA small subunit methyltransferase C">
    <location>
        <begin position="1"/>
        <end position="343"/>
    </location>
</feature>
<sequence>MSAFTPASEVLLRHSDDFEQSRILFAGDLQDDLPARLDTAASRAHTQQFHHWQVLSRQMGDNARFSLVATADDVADCDTLIYYWPKNKPEAQFQLMNLLSLLPVGTDIFVVGENRSGVRSAEQMLADYAPLNKVDSARRCGLYFGRLEKQPVFDANKFWGEYSVDGLTVKTLPGVFSRDGLDVGSQLLLSTLTPHTKGKVLDVGCGAGVLSVAFARHSPKIRLTLCDVSAPAVEASRATLAANSVEGEVFASNVFSEVKGRFDMIISNPPFHDGMQTSLDAAQTLIRGAVRHLNSGGELRIVANAFLPYPDVLDETFGFHEVIAQTGRFKVYRAIMTRQAKKG</sequence>
<proteinExistence type="inferred from homology"/>